<proteinExistence type="inferred from homology"/>
<reference key="1">
    <citation type="journal article" date="2000" name="Nature">
        <title>The genome sequence of the plant pathogen Xylella fastidiosa.</title>
        <authorList>
            <person name="Simpson A.J.G."/>
            <person name="Reinach F.C."/>
            <person name="Arruda P."/>
            <person name="Abreu F.A."/>
            <person name="Acencio M."/>
            <person name="Alvarenga R."/>
            <person name="Alves L.M.C."/>
            <person name="Araya J.E."/>
            <person name="Baia G.S."/>
            <person name="Baptista C.S."/>
            <person name="Barros M.H."/>
            <person name="Bonaccorsi E.D."/>
            <person name="Bordin S."/>
            <person name="Bove J.M."/>
            <person name="Briones M.R.S."/>
            <person name="Bueno M.R.P."/>
            <person name="Camargo A.A."/>
            <person name="Camargo L.E.A."/>
            <person name="Carraro D.M."/>
            <person name="Carrer H."/>
            <person name="Colauto N.B."/>
            <person name="Colombo C."/>
            <person name="Costa F.F."/>
            <person name="Costa M.C.R."/>
            <person name="Costa-Neto C.M."/>
            <person name="Coutinho L.L."/>
            <person name="Cristofani M."/>
            <person name="Dias-Neto E."/>
            <person name="Docena C."/>
            <person name="El-Dorry H."/>
            <person name="Facincani A.P."/>
            <person name="Ferreira A.J.S."/>
            <person name="Ferreira V.C.A."/>
            <person name="Ferro J.A."/>
            <person name="Fraga J.S."/>
            <person name="Franca S.C."/>
            <person name="Franco M.C."/>
            <person name="Frohme M."/>
            <person name="Furlan L.R."/>
            <person name="Garnier M."/>
            <person name="Goldman G.H."/>
            <person name="Goldman M.H.S."/>
            <person name="Gomes S.L."/>
            <person name="Gruber A."/>
            <person name="Ho P.L."/>
            <person name="Hoheisel J.D."/>
            <person name="Junqueira M.L."/>
            <person name="Kemper E.L."/>
            <person name="Kitajima J.P."/>
            <person name="Krieger J.E."/>
            <person name="Kuramae E.E."/>
            <person name="Laigret F."/>
            <person name="Lambais M.R."/>
            <person name="Leite L.C.C."/>
            <person name="Lemos E.G.M."/>
            <person name="Lemos M.V.F."/>
            <person name="Lopes S.A."/>
            <person name="Lopes C.R."/>
            <person name="Machado J.A."/>
            <person name="Machado M.A."/>
            <person name="Madeira A.M.B.N."/>
            <person name="Madeira H.M.F."/>
            <person name="Marino C.L."/>
            <person name="Marques M.V."/>
            <person name="Martins E.A.L."/>
            <person name="Martins E.M.F."/>
            <person name="Matsukuma A.Y."/>
            <person name="Menck C.F.M."/>
            <person name="Miracca E.C."/>
            <person name="Miyaki C.Y."/>
            <person name="Monteiro-Vitorello C.B."/>
            <person name="Moon D.H."/>
            <person name="Nagai M.A."/>
            <person name="Nascimento A.L.T.O."/>
            <person name="Netto L.E.S."/>
            <person name="Nhani A. Jr."/>
            <person name="Nobrega F.G."/>
            <person name="Nunes L.R."/>
            <person name="Oliveira M.A."/>
            <person name="de Oliveira M.C."/>
            <person name="de Oliveira R.C."/>
            <person name="Palmieri D.A."/>
            <person name="Paris A."/>
            <person name="Peixoto B.R."/>
            <person name="Pereira G.A.G."/>
            <person name="Pereira H.A. Jr."/>
            <person name="Pesquero J.B."/>
            <person name="Quaggio R.B."/>
            <person name="Roberto P.G."/>
            <person name="Rodrigues V."/>
            <person name="de Rosa A.J.M."/>
            <person name="de Rosa V.E. Jr."/>
            <person name="de Sa R.G."/>
            <person name="Santelli R.V."/>
            <person name="Sawasaki H.E."/>
            <person name="da Silva A.C.R."/>
            <person name="da Silva A.M."/>
            <person name="da Silva F.R."/>
            <person name="Silva W.A. Jr."/>
            <person name="da Silveira J.F."/>
            <person name="Silvestri M.L.Z."/>
            <person name="Siqueira W.J."/>
            <person name="de Souza A.A."/>
            <person name="de Souza A.P."/>
            <person name="Terenzi M.F."/>
            <person name="Truffi D."/>
            <person name="Tsai S.M."/>
            <person name="Tsuhako M.H."/>
            <person name="Vallada H."/>
            <person name="Van Sluys M.A."/>
            <person name="Verjovski-Almeida S."/>
            <person name="Vettore A.L."/>
            <person name="Zago M.A."/>
            <person name="Zatz M."/>
            <person name="Meidanis J."/>
            <person name="Setubal J.C."/>
        </authorList>
    </citation>
    <scope>NUCLEOTIDE SEQUENCE [LARGE SCALE GENOMIC DNA]</scope>
    <source>
        <strain>9a5c</strain>
    </source>
</reference>
<dbReference type="EMBL" id="AE003849">
    <property type="protein sequence ID" value="AAF84017.1"/>
    <property type="molecule type" value="Genomic_DNA"/>
</dbReference>
<dbReference type="PIR" id="F82711">
    <property type="entry name" value="F82711"/>
</dbReference>
<dbReference type="RefSeq" id="WP_004086566.1">
    <property type="nucleotide sequence ID" value="NC_002488.3"/>
</dbReference>
<dbReference type="SMR" id="P66240"/>
<dbReference type="STRING" id="160492.XF_1207"/>
<dbReference type="GeneID" id="93904191"/>
<dbReference type="KEGG" id="xfa:XF_1207"/>
<dbReference type="eggNOG" id="COG0267">
    <property type="taxonomic scope" value="Bacteria"/>
</dbReference>
<dbReference type="HOGENOM" id="CLU_190949_1_1_6"/>
<dbReference type="Proteomes" id="UP000000812">
    <property type="component" value="Chromosome"/>
</dbReference>
<dbReference type="GO" id="GO:0022625">
    <property type="term" value="C:cytosolic large ribosomal subunit"/>
    <property type="evidence" value="ECO:0007669"/>
    <property type="project" value="TreeGrafter"/>
</dbReference>
<dbReference type="GO" id="GO:0003735">
    <property type="term" value="F:structural constituent of ribosome"/>
    <property type="evidence" value="ECO:0007669"/>
    <property type="project" value="InterPro"/>
</dbReference>
<dbReference type="GO" id="GO:0006412">
    <property type="term" value="P:translation"/>
    <property type="evidence" value="ECO:0007669"/>
    <property type="project" value="UniProtKB-UniRule"/>
</dbReference>
<dbReference type="FunFam" id="2.20.28.120:FF:000001">
    <property type="entry name" value="50S ribosomal protein L33"/>
    <property type="match status" value="1"/>
</dbReference>
<dbReference type="Gene3D" id="2.20.28.120">
    <property type="entry name" value="Ribosomal protein L33"/>
    <property type="match status" value="1"/>
</dbReference>
<dbReference type="HAMAP" id="MF_00294">
    <property type="entry name" value="Ribosomal_bL33"/>
    <property type="match status" value="1"/>
</dbReference>
<dbReference type="InterPro" id="IPR001705">
    <property type="entry name" value="Ribosomal_bL33"/>
</dbReference>
<dbReference type="InterPro" id="IPR018264">
    <property type="entry name" value="Ribosomal_bL33_CS"/>
</dbReference>
<dbReference type="InterPro" id="IPR038584">
    <property type="entry name" value="Ribosomal_bL33_sf"/>
</dbReference>
<dbReference type="InterPro" id="IPR011332">
    <property type="entry name" value="Ribosomal_zn-bd"/>
</dbReference>
<dbReference type="NCBIfam" id="NF001860">
    <property type="entry name" value="PRK00595.1"/>
    <property type="match status" value="1"/>
</dbReference>
<dbReference type="NCBIfam" id="TIGR01023">
    <property type="entry name" value="rpmG_bact"/>
    <property type="match status" value="1"/>
</dbReference>
<dbReference type="PANTHER" id="PTHR15238">
    <property type="entry name" value="54S RIBOSOMAL PROTEIN L39, MITOCHONDRIAL"/>
    <property type="match status" value="1"/>
</dbReference>
<dbReference type="PANTHER" id="PTHR15238:SF1">
    <property type="entry name" value="LARGE RIBOSOMAL SUBUNIT PROTEIN BL33M"/>
    <property type="match status" value="1"/>
</dbReference>
<dbReference type="Pfam" id="PF00471">
    <property type="entry name" value="Ribosomal_L33"/>
    <property type="match status" value="1"/>
</dbReference>
<dbReference type="SUPFAM" id="SSF57829">
    <property type="entry name" value="Zn-binding ribosomal proteins"/>
    <property type="match status" value="1"/>
</dbReference>
<dbReference type="PROSITE" id="PS00582">
    <property type="entry name" value="RIBOSOMAL_L33"/>
    <property type="match status" value="1"/>
</dbReference>
<comment type="similarity">
    <text evidence="1">Belongs to the bacterial ribosomal protein bL33 family.</text>
</comment>
<keyword id="KW-0687">Ribonucleoprotein</keyword>
<keyword id="KW-0689">Ribosomal protein</keyword>
<feature type="chain" id="PRO_0000170268" description="Large ribosomal subunit protein bL33">
    <location>
        <begin position="1"/>
        <end position="54"/>
    </location>
</feature>
<organism>
    <name type="scientific">Xylella fastidiosa (strain 9a5c)</name>
    <dbReference type="NCBI Taxonomy" id="160492"/>
    <lineage>
        <taxon>Bacteria</taxon>
        <taxon>Pseudomonadati</taxon>
        <taxon>Pseudomonadota</taxon>
        <taxon>Gammaproteobacteria</taxon>
        <taxon>Lysobacterales</taxon>
        <taxon>Lysobacteraceae</taxon>
        <taxon>Xylella</taxon>
    </lineage>
</organism>
<accession>P66240</accession>
<accession>Q9PE21</accession>
<name>RL33_XYLFA</name>
<evidence type="ECO:0000305" key="1"/>
<gene>
    <name type="primary">rpmG</name>
    <name type="ordered locus">XF_1207</name>
</gene>
<protein>
    <recommendedName>
        <fullName evidence="1">Large ribosomal subunit protein bL33</fullName>
    </recommendedName>
    <alternativeName>
        <fullName>50S ribosomal protein L33</fullName>
    </alternativeName>
</protein>
<sequence length="54" mass="6365">MAGKRDKIRLISSADTGHFYTTDKNKKNTPGKLEFKKYDPRVRRHVIYKEGKIK</sequence>